<evidence type="ECO:0000255" key="1">
    <source>
        <dbReference type="HAMAP-Rule" id="MF_00504"/>
    </source>
</evidence>
<organism>
    <name type="scientific">Yersinia pseudotuberculosis serotype O:3 (strain YPIII)</name>
    <dbReference type="NCBI Taxonomy" id="502800"/>
    <lineage>
        <taxon>Bacteria</taxon>
        <taxon>Pseudomonadati</taxon>
        <taxon>Pseudomonadota</taxon>
        <taxon>Gammaproteobacteria</taxon>
        <taxon>Enterobacterales</taxon>
        <taxon>Yersiniaceae</taxon>
        <taxon>Yersinia</taxon>
    </lineage>
</organism>
<name>PEPB_YERPY</name>
<reference key="1">
    <citation type="submission" date="2008-02" db="EMBL/GenBank/DDBJ databases">
        <title>Complete sequence of Yersinia pseudotuberculosis YPIII.</title>
        <authorList>
            <consortium name="US DOE Joint Genome Institute"/>
            <person name="Copeland A."/>
            <person name="Lucas S."/>
            <person name="Lapidus A."/>
            <person name="Glavina del Rio T."/>
            <person name="Dalin E."/>
            <person name="Tice H."/>
            <person name="Bruce D."/>
            <person name="Goodwin L."/>
            <person name="Pitluck S."/>
            <person name="Munk A.C."/>
            <person name="Brettin T."/>
            <person name="Detter J.C."/>
            <person name="Han C."/>
            <person name="Tapia R."/>
            <person name="Schmutz J."/>
            <person name="Larimer F."/>
            <person name="Land M."/>
            <person name="Hauser L."/>
            <person name="Challacombe J.F."/>
            <person name="Green L."/>
            <person name="Lindler L.E."/>
            <person name="Nikolich M.P."/>
            <person name="Richardson P."/>
        </authorList>
    </citation>
    <scope>NUCLEOTIDE SEQUENCE [LARGE SCALE GENOMIC DNA]</scope>
    <source>
        <strain>YPIII</strain>
    </source>
</reference>
<accession>B1JRZ6</accession>
<feature type="chain" id="PRO_1000127020" description="Peptidase B">
    <location>
        <begin position="1"/>
        <end position="432"/>
    </location>
</feature>
<feature type="active site" evidence="1">
    <location>
        <position position="208"/>
    </location>
</feature>
<feature type="active site" evidence="1">
    <location>
        <position position="282"/>
    </location>
</feature>
<feature type="binding site" evidence="1">
    <location>
        <position position="196"/>
    </location>
    <ligand>
        <name>Mn(2+)</name>
        <dbReference type="ChEBI" id="CHEBI:29035"/>
        <label>2</label>
    </ligand>
</feature>
<feature type="binding site" evidence="1">
    <location>
        <position position="201"/>
    </location>
    <ligand>
        <name>Mn(2+)</name>
        <dbReference type="ChEBI" id="CHEBI:29035"/>
        <label>1</label>
    </ligand>
</feature>
<feature type="binding site" evidence="1">
    <location>
        <position position="201"/>
    </location>
    <ligand>
        <name>Mn(2+)</name>
        <dbReference type="ChEBI" id="CHEBI:29035"/>
        <label>2</label>
    </ligand>
</feature>
<feature type="binding site" evidence="1">
    <location>
        <position position="219"/>
    </location>
    <ligand>
        <name>Mn(2+)</name>
        <dbReference type="ChEBI" id="CHEBI:29035"/>
        <label>2</label>
    </ligand>
</feature>
<feature type="binding site" evidence="1">
    <location>
        <position position="278"/>
    </location>
    <ligand>
        <name>Mn(2+)</name>
        <dbReference type="ChEBI" id="CHEBI:29035"/>
        <label>1</label>
    </ligand>
</feature>
<feature type="binding site" evidence="1">
    <location>
        <position position="280"/>
    </location>
    <ligand>
        <name>Mn(2+)</name>
        <dbReference type="ChEBI" id="CHEBI:29035"/>
        <label>1</label>
    </ligand>
</feature>
<feature type="binding site" evidence="1">
    <location>
        <position position="280"/>
    </location>
    <ligand>
        <name>Mn(2+)</name>
        <dbReference type="ChEBI" id="CHEBI:29035"/>
        <label>2</label>
    </ligand>
</feature>
<sequence>MTTEIMQISLSHNPADARWGEKALISTNDQGVTIHLTSHDQLGGIQRAARKIDGQGIKQVKLAGEGWGLEQSWAFWQGFRGPKGQRSVVWAELPANEKTELEQRLKIIDWVRDTINAPAEDLGPEQLAKNAIDLLCAVSCDAVSYRITKGEDLREQNYAGIYTVGRGSDRAPVLLALDYNPTGNPDAPVMACLVGKGITFDSGGYSLKQSAFMDSMKSDMGGAATLTGALALAAARGLKERVKLYLCCADNMVSGNAFKLGDIIRYRNGKTVEIMNTDAEGRLVLADGLIDASEQNAPLIIDAATLTGAAKTALGNDYHALFSFDDELAQALLNSAHSEHELFWRLPLAEFHRSQLPSNFAELNNVAGGAYSAGASTAAAFLSHFVKNYQQGWLHIDCSATYRKSAVDQWSAGATGLGVRTVANLLLAQAKQ</sequence>
<comment type="function">
    <text evidence="1">Probably plays an important role in intracellular peptide degradation.</text>
</comment>
<comment type="catalytic activity">
    <reaction evidence="1">
        <text>Release of an N-terminal amino acid, Xaa, from a peptide or arylamide. Xaa is preferably Glu or Asp but may be other amino acids, including Leu, Met, His, Cys and Gln.</text>
        <dbReference type="EC" id="3.4.11.23"/>
    </reaction>
</comment>
<comment type="cofactor">
    <cofactor evidence="1">
        <name>Mn(2+)</name>
        <dbReference type="ChEBI" id="CHEBI:29035"/>
    </cofactor>
    <text evidence="1">Binds 2 manganese ions per subunit.</text>
</comment>
<comment type="subunit">
    <text evidence="1">Homohexamer.</text>
</comment>
<comment type="subcellular location">
    <subcellularLocation>
        <location evidence="1">Cytoplasm</location>
    </subcellularLocation>
</comment>
<comment type="similarity">
    <text evidence="1">Belongs to the peptidase M17 family.</text>
</comment>
<gene>
    <name evidence="1" type="primary">pepB</name>
    <name type="ordered locus">YPK_1284</name>
</gene>
<proteinExistence type="inferred from homology"/>
<dbReference type="EC" id="3.4.11.23" evidence="1"/>
<dbReference type="EMBL" id="CP000950">
    <property type="protein sequence ID" value="ACA67582.1"/>
    <property type="molecule type" value="Genomic_DNA"/>
</dbReference>
<dbReference type="RefSeq" id="WP_002209829.1">
    <property type="nucleotide sequence ID" value="NZ_CP009792.1"/>
</dbReference>
<dbReference type="SMR" id="B1JRZ6"/>
<dbReference type="MEROPS" id="M17.004"/>
<dbReference type="GeneID" id="57975846"/>
<dbReference type="KEGG" id="ypy:YPK_1284"/>
<dbReference type="PATRIC" id="fig|502800.11.peg.1919"/>
<dbReference type="GO" id="GO:0005737">
    <property type="term" value="C:cytoplasm"/>
    <property type="evidence" value="ECO:0007669"/>
    <property type="project" value="UniProtKB-SubCell"/>
</dbReference>
<dbReference type="GO" id="GO:0030145">
    <property type="term" value="F:manganese ion binding"/>
    <property type="evidence" value="ECO:0007669"/>
    <property type="project" value="UniProtKB-UniRule"/>
</dbReference>
<dbReference type="GO" id="GO:0070006">
    <property type="term" value="F:metalloaminopeptidase activity"/>
    <property type="evidence" value="ECO:0007669"/>
    <property type="project" value="InterPro"/>
</dbReference>
<dbReference type="GO" id="GO:0006508">
    <property type="term" value="P:proteolysis"/>
    <property type="evidence" value="ECO:0007669"/>
    <property type="project" value="UniProtKB-UniRule"/>
</dbReference>
<dbReference type="CDD" id="cd00433">
    <property type="entry name" value="Peptidase_M17"/>
    <property type="match status" value="1"/>
</dbReference>
<dbReference type="FunFam" id="3.40.630.10:FF:000037">
    <property type="entry name" value="Peptidase B"/>
    <property type="match status" value="1"/>
</dbReference>
<dbReference type="Gene3D" id="3.40.630.10">
    <property type="entry name" value="Zn peptidases"/>
    <property type="match status" value="1"/>
</dbReference>
<dbReference type="HAMAP" id="MF_00504">
    <property type="entry name" value="Aminopeptidase_M17"/>
    <property type="match status" value="1"/>
</dbReference>
<dbReference type="InterPro" id="IPR011356">
    <property type="entry name" value="Leucine_aapep/pepB"/>
</dbReference>
<dbReference type="InterPro" id="IPR047620">
    <property type="entry name" value="M17_PepB-like_N"/>
</dbReference>
<dbReference type="InterPro" id="IPR008330">
    <property type="entry name" value="Pept_M17_PepB"/>
</dbReference>
<dbReference type="InterPro" id="IPR000819">
    <property type="entry name" value="Peptidase_M17_C"/>
</dbReference>
<dbReference type="NCBIfam" id="NF003450">
    <property type="entry name" value="PRK05015.1"/>
    <property type="match status" value="1"/>
</dbReference>
<dbReference type="PANTHER" id="PTHR11963">
    <property type="entry name" value="LEUCINE AMINOPEPTIDASE-RELATED"/>
    <property type="match status" value="1"/>
</dbReference>
<dbReference type="PANTHER" id="PTHR11963:SF20">
    <property type="entry name" value="PEPTIDASE B"/>
    <property type="match status" value="1"/>
</dbReference>
<dbReference type="Pfam" id="PF12404">
    <property type="entry name" value="DUF3663"/>
    <property type="match status" value="1"/>
</dbReference>
<dbReference type="Pfam" id="PF00883">
    <property type="entry name" value="Peptidase_M17"/>
    <property type="match status" value="1"/>
</dbReference>
<dbReference type="PIRSF" id="PIRSF036388">
    <property type="entry name" value="Ctsl_amnpptdse_B"/>
    <property type="match status" value="1"/>
</dbReference>
<dbReference type="PRINTS" id="PR00481">
    <property type="entry name" value="LAMNOPPTDASE"/>
</dbReference>
<dbReference type="SUPFAM" id="SSF53187">
    <property type="entry name" value="Zn-dependent exopeptidases"/>
    <property type="match status" value="1"/>
</dbReference>
<dbReference type="PROSITE" id="PS00631">
    <property type="entry name" value="CYTOSOL_AP"/>
    <property type="match status" value="1"/>
</dbReference>
<keyword id="KW-0031">Aminopeptidase</keyword>
<keyword id="KW-0963">Cytoplasm</keyword>
<keyword id="KW-0378">Hydrolase</keyword>
<keyword id="KW-0464">Manganese</keyword>
<keyword id="KW-0479">Metal-binding</keyword>
<keyword id="KW-0645">Protease</keyword>
<protein>
    <recommendedName>
        <fullName evidence="1">Peptidase B</fullName>
        <ecNumber evidence="1">3.4.11.23</ecNumber>
    </recommendedName>
    <alternativeName>
        <fullName evidence="1">Aminopeptidase B</fullName>
    </alternativeName>
</protein>